<dbReference type="EMBL" id="CP000387">
    <property type="protein sequence ID" value="ABN43887.1"/>
    <property type="molecule type" value="Genomic_DNA"/>
</dbReference>
<dbReference type="RefSeq" id="WP_002896497.1">
    <property type="nucleotide sequence ID" value="NZ_CAXTYR010000003.1"/>
</dbReference>
<dbReference type="RefSeq" id="YP_001034437.1">
    <property type="nucleotide sequence ID" value="NC_009009.1"/>
</dbReference>
<dbReference type="SMR" id="A3CL32"/>
<dbReference type="STRING" id="388919.SSA_0437"/>
<dbReference type="GeneID" id="93788158"/>
<dbReference type="KEGG" id="ssa:SSA_0437"/>
<dbReference type="PATRIC" id="fig|388919.9.peg.423"/>
<dbReference type="eggNOG" id="COG0360">
    <property type="taxonomic scope" value="Bacteria"/>
</dbReference>
<dbReference type="HOGENOM" id="CLU_113441_5_3_9"/>
<dbReference type="OrthoDB" id="9812702at2"/>
<dbReference type="PRO" id="PR:A3CL32"/>
<dbReference type="Proteomes" id="UP000002148">
    <property type="component" value="Chromosome"/>
</dbReference>
<dbReference type="GO" id="GO:0005737">
    <property type="term" value="C:cytoplasm"/>
    <property type="evidence" value="ECO:0007669"/>
    <property type="project" value="UniProtKB-ARBA"/>
</dbReference>
<dbReference type="GO" id="GO:1990904">
    <property type="term" value="C:ribonucleoprotein complex"/>
    <property type="evidence" value="ECO:0007669"/>
    <property type="project" value="UniProtKB-KW"/>
</dbReference>
<dbReference type="GO" id="GO:0005840">
    <property type="term" value="C:ribosome"/>
    <property type="evidence" value="ECO:0007669"/>
    <property type="project" value="UniProtKB-KW"/>
</dbReference>
<dbReference type="GO" id="GO:0070181">
    <property type="term" value="F:small ribosomal subunit rRNA binding"/>
    <property type="evidence" value="ECO:0007669"/>
    <property type="project" value="TreeGrafter"/>
</dbReference>
<dbReference type="GO" id="GO:0003735">
    <property type="term" value="F:structural constituent of ribosome"/>
    <property type="evidence" value="ECO:0007669"/>
    <property type="project" value="InterPro"/>
</dbReference>
<dbReference type="GO" id="GO:0006412">
    <property type="term" value="P:translation"/>
    <property type="evidence" value="ECO:0007669"/>
    <property type="project" value="UniProtKB-UniRule"/>
</dbReference>
<dbReference type="CDD" id="cd00473">
    <property type="entry name" value="bS6"/>
    <property type="match status" value="1"/>
</dbReference>
<dbReference type="FunFam" id="3.30.70.60:FF:000002">
    <property type="entry name" value="30S ribosomal protein S6"/>
    <property type="match status" value="1"/>
</dbReference>
<dbReference type="Gene3D" id="3.30.70.60">
    <property type="match status" value="1"/>
</dbReference>
<dbReference type="HAMAP" id="MF_00360">
    <property type="entry name" value="Ribosomal_bS6"/>
    <property type="match status" value="1"/>
</dbReference>
<dbReference type="InterPro" id="IPR000529">
    <property type="entry name" value="Ribosomal_bS6"/>
</dbReference>
<dbReference type="InterPro" id="IPR035980">
    <property type="entry name" value="Ribosomal_bS6_sf"/>
</dbReference>
<dbReference type="InterPro" id="IPR020814">
    <property type="entry name" value="Ribosomal_S6_plastid/chlpt"/>
</dbReference>
<dbReference type="InterPro" id="IPR014717">
    <property type="entry name" value="Transl_elong_EF1B/ribsomal_bS6"/>
</dbReference>
<dbReference type="NCBIfam" id="TIGR00166">
    <property type="entry name" value="S6"/>
    <property type="match status" value="1"/>
</dbReference>
<dbReference type="PANTHER" id="PTHR21011">
    <property type="entry name" value="MITOCHONDRIAL 28S RIBOSOMAL PROTEIN S6"/>
    <property type="match status" value="1"/>
</dbReference>
<dbReference type="PANTHER" id="PTHR21011:SF1">
    <property type="entry name" value="SMALL RIBOSOMAL SUBUNIT PROTEIN BS6M"/>
    <property type="match status" value="1"/>
</dbReference>
<dbReference type="Pfam" id="PF01250">
    <property type="entry name" value="Ribosomal_S6"/>
    <property type="match status" value="1"/>
</dbReference>
<dbReference type="SUPFAM" id="SSF54995">
    <property type="entry name" value="Ribosomal protein S6"/>
    <property type="match status" value="1"/>
</dbReference>
<protein>
    <recommendedName>
        <fullName evidence="1">Small ribosomal subunit protein bS6</fullName>
    </recommendedName>
    <alternativeName>
        <fullName evidence="2">30S ribosomal protein S6</fullName>
    </alternativeName>
</protein>
<comment type="function">
    <text evidence="1">Binds together with bS18 to 16S ribosomal RNA.</text>
</comment>
<comment type="similarity">
    <text evidence="1">Belongs to the bacterial ribosomal protein bS6 family.</text>
</comment>
<accession>A3CL32</accession>
<reference key="1">
    <citation type="journal article" date="2007" name="J. Bacteriol.">
        <title>Genome of the opportunistic pathogen Streptococcus sanguinis.</title>
        <authorList>
            <person name="Xu P."/>
            <person name="Alves J.M."/>
            <person name="Kitten T."/>
            <person name="Brown A."/>
            <person name="Chen Z."/>
            <person name="Ozaki L.S."/>
            <person name="Manque P."/>
            <person name="Ge X."/>
            <person name="Serrano M.G."/>
            <person name="Puiu D."/>
            <person name="Hendricks S."/>
            <person name="Wang Y."/>
            <person name="Chaplin M.D."/>
            <person name="Akan D."/>
            <person name="Paik S."/>
            <person name="Peterson D.L."/>
            <person name="Macrina F.L."/>
            <person name="Buck G.A."/>
        </authorList>
    </citation>
    <scope>NUCLEOTIDE SEQUENCE [LARGE SCALE GENOMIC DNA]</scope>
    <source>
        <strain>SK36</strain>
    </source>
</reference>
<sequence length="96" mass="11167">MAKYEILYIIRPNIEEEAKNALVARFDSILTDNGATVVESKDWEKRRLAYEIQDFREGLYHIVNVEANDDAALKEFDRLSKINADILRHMIVKLDA</sequence>
<proteinExistence type="inferred from homology"/>
<keyword id="KW-1185">Reference proteome</keyword>
<keyword id="KW-0687">Ribonucleoprotein</keyword>
<keyword id="KW-0689">Ribosomal protein</keyword>
<keyword id="KW-0694">RNA-binding</keyword>
<keyword id="KW-0699">rRNA-binding</keyword>
<feature type="chain" id="PRO_1000005369" description="Small ribosomal subunit protein bS6">
    <location>
        <begin position="1"/>
        <end position="96"/>
    </location>
</feature>
<name>RS6_STRSV</name>
<organism>
    <name type="scientific">Streptococcus sanguinis (strain SK36)</name>
    <dbReference type="NCBI Taxonomy" id="388919"/>
    <lineage>
        <taxon>Bacteria</taxon>
        <taxon>Bacillati</taxon>
        <taxon>Bacillota</taxon>
        <taxon>Bacilli</taxon>
        <taxon>Lactobacillales</taxon>
        <taxon>Streptococcaceae</taxon>
        <taxon>Streptococcus</taxon>
    </lineage>
</organism>
<evidence type="ECO:0000255" key="1">
    <source>
        <dbReference type="HAMAP-Rule" id="MF_00360"/>
    </source>
</evidence>
<evidence type="ECO:0000305" key="2"/>
<gene>
    <name evidence="1" type="primary">rpsF</name>
    <name type="ordered locus">SSA_0437</name>
</gene>